<reference key="1">
    <citation type="submission" date="2007-06" db="EMBL/GenBank/DDBJ databases">
        <title>Complete sequence of Sinorhizobium medicae WSM419 chromosome.</title>
        <authorList>
            <consortium name="US DOE Joint Genome Institute"/>
            <person name="Copeland A."/>
            <person name="Lucas S."/>
            <person name="Lapidus A."/>
            <person name="Barry K."/>
            <person name="Glavina del Rio T."/>
            <person name="Dalin E."/>
            <person name="Tice H."/>
            <person name="Pitluck S."/>
            <person name="Chain P."/>
            <person name="Malfatti S."/>
            <person name="Shin M."/>
            <person name="Vergez L."/>
            <person name="Schmutz J."/>
            <person name="Larimer F."/>
            <person name="Land M."/>
            <person name="Hauser L."/>
            <person name="Kyrpides N."/>
            <person name="Mikhailova N."/>
            <person name="Reeve W.G."/>
            <person name="Richardson P."/>
        </authorList>
    </citation>
    <scope>NUCLEOTIDE SEQUENCE [LARGE SCALE GENOMIC DNA]</scope>
    <source>
        <strain>WSM419</strain>
    </source>
</reference>
<feature type="chain" id="PRO_1000067901" description="Large ribosomal subunit protein bL21">
    <location>
        <begin position="1"/>
        <end position="124"/>
    </location>
</feature>
<organism>
    <name type="scientific">Sinorhizobium medicae (strain WSM419)</name>
    <name type="common">Ensifer medicae</name>
    <dbReference type="NCBI Taxonomy" id="366394"/>
    <lineage>
        <taxon>Bacteria</taxon>
        <taxon>Pseudomonadati</taxon>
        <taxon>Pseudomonadota</taxon>
        <taxon>Alphaproteobacteria</taxon>
        <taxon>Hyphomicrobiales</taxon>
        <taxon>Rhizobiaceae</taxon>
        <taxon>Sinorhizobium/Ensifer group</taxon>
        <taxon>Sinorhizobium</taxon>
    </lineage>
</organism>
<sequence>MFAVIKTGGKQYRVAANDVITIEKLDGAAGDKIEFTEILMVGAGADATIGAPFVEGAVVSAEVVDHGRAKKVIAFKKRRRQNSKRTRGHRQHHTIVRILDIAAAGGKAKKASKKAEAAAEEAAN</sequence>
<name>RL21_SINMW</name>
<dbReference type="EMBL" id="CP000738">
    <property type="protein sequence ID" value="ABR61832.1"/>
    <property type="molecule type" value="Genomic_DNA"/>
</dbReference>
<dbReference type="RefSeq" id="YP_001328667.1">
    <property type="nucleotide sequence ID" value="NC_009636.1"/>
</dbReference>
<dbReference type="SMR" id="A6UDV2"/>
<dbReference type="STRING" id="366394.Smed_3005"/>
<dbReference type="KEGG" id="smd:Smed_3005"/>
<dbReference type="PATRIC" id="fig|366394.8.peg.6230"/>
<dbReference type="eggNOG" id="COG0261">
    <property type="taxonomic scope" value="Bacteria"/>
</dbReference>
<dbReference type="HOGENOM" id="CLU_061463_1_2_5"/>
<dbReference type="OrthoDB" id="9813334at2"/>
<dbReference type="Proteomes" id="UP000001108">
    <property type="component" value="Chromosome"/>
</dbReference>
<dbReference type="GO" id="GO:0005737">
    <property type="term" value="C:cytoplasm"/>
    <property type="evidence" value="ECO:0007669"/>
    <property type="project" value="UniProtKB-ARBA"/>
</dbReference>
<dbReference type="GO" id="GO:1990904">
    <property type="term" value="C:ribonucleoprotein complex"/>
    <property type="evidence" value="ECO:0007669"/>
    <property type="project" value="UniProtKB-KW"/>
</dbReference>
<dbReference type="GO" id="GO:0005840">
    <property type="term" value="C:ribosome"/>
    <property type="evidence" value="ECO:0007669"/>
    <property type="project" value="UniProtKB-KW"/>
</dbReference>
<dbReference type="GO" id="GO:0019843">
    <property type="term" value="F:rRNA binding"/>
    <property type="evidence" value="ECO:0007669"/>
    <property type="project" value="UniProtKB-UniRule"/>
</dbReference>
<dbReference type="GO" id="GO:0003735">
    <property type="term" value="F:structural constituent of ribosome"/>
    <property type="evidence" value="ECO:0007669"/>
    <property type="project" value="InterPro"/>
</dbReference>
<dbReference type="GO" id="GO:0006412">
    <property type="term" value="P:translation"/>
    <property type="evidence" value="ECO:0007669"/>
    <property type="project" value="UniProtKB-UniRule"/>
</dbReference>
<dbReference type="HAMAP" id="MF_01363">
    <property type="entry name" value="Ribosomal_bL21"/>
    <property type="match status" value="1"/>
</dbReference>
<dbReference type="InterPro" id="IPR028909">
    <property type="entry name" value="bL21-like"/>
</dbReference>
<dbReference type="InterPro" id="IPR036164">
    <property type="entry name" value="bL21-like_sf"/>
</dbReference>
<dbReference type="InterPro" id="IPR001787">
    <property type="entry name" value="Ribosomal_bL21"/>
</dbReference>
<dbReference type="NCBIfam" id="TIGR00061">
    <property type="entry name" value="L21"/>
    <property type="match status" value="1"/>
</dbReference>
<dbReference type="PANTHER" id="PTHR21349">
    <property type="entry name" value="50S RIBOSOMAL PROTEIN L21"/>
    <property type="match status" value="1"/>
</dbReference>
<dbReference type="PANTHER" id="PTHR21349:SF0">
    <property type="entry name" value="LARGE RIBOSOMAL SUBUNIT PROTEIN BL21M"/>
    <property type="match status" value="1"/>
</dbReference>
<dbReference type="Pfam" id="PF00829">
    <property type="entry name" value="Ribosomal_L21p"/>
    <property type="match status" value="1"/>
</dbReference>
<dbReference type="SUPFAM" id="SSF141091">
    <property type="entry name" value="L21p-like"/>
    <property type="match status" value="1"/>
</dbReference>
<evidence type="ECO:0000255" key="1">
    <source>
        <dbReference type="HAMAP-Rule" id="MF_01363"/>
    </source>
</evidence>
<evidence type="ECO:0000305" key="2"/>
<proteinExistence type="inferred from homology"/>
<comment type="function">
    <text evidence="1">This protein binds to 23S rRNA in the presence of protein L20.</text>
</comment>
<comment type="subunit">
    <text evidence="1">Part of the 50S ribosomal subunit. Contacts protein L20.</text>
</comment>
<comment type="similarity">
    <text evidence="1">Belongs to the bacterial ribosomal protein bL21 family.</text>
</comment>
<accession>A6UDV2</accession>
<protein>
    <recommendedName>
        <fullName evidence="1">Large ribosomal subunit protein bL21</fullName>
    </recommendedName>
    <alternativeName>
        <fullName evidence="2">50S ribosomal protein L21</fullName>
    </alternativeName>
</protein>
<gene>
    <name evidence="1" type="primary">rplU</name>
    <name type="ordered locus">Smed_3005</name>
</gene>
<keyword id="KW-0687">Ribonucleoprotein</keyword>
<keyword id="KW-0689">Ribosomal protein</keyword>
<keyword id="KW-0694">RNA-binding</keyword>
<keyword id="KW-0699">rRNA-binding</keyword>